<sequence>MAPPAARARYIANKADNQILSKKPPKRPGLNGNNKTKEATPAGKKKDKDAKKRNQPTSGGQEKGLPNPIMPSVQTAFKTFVSARLCSAIWAYIADCDETFNYWEPLHYIINGHGLQTWEYSPQFGLRSYTYLLLQGVPGYFYQKLFNPSPILIFYMVRCMLGFGCAVMERYMYKSICQEFGIHIGRLWLIFQLFSVGMFVSSTALLPSSFSMYFGCAALAAWWQQNYCFAIFLTAISALLGWPFAALIGIPLVLEMLLRQRDWKTFVQWTLISGATVAIPMIAIDTSYFGKLTFAPLNIVWYNVFTSHGPNIFGTEPLSYYIINGFLNFNIIWLLALQLPIMLVIDYLIVPAKSKSTLNFPHYISLAPLYLWLLVFFAQPHKEERFLFPIYPLISLCGAITVDVYQRIFFRMKSVVFKIKAGVHYLDHSMFIAILVMVTSTLLGLSRVFALYRNYHAPMDLMLELNQFKATPQYDPDVIYNVCIGKDWHRYPGSFFFPAKNFRLRFLKSEFRGMLPAYYDEGQNATKVVQPYFNDLNQENEHMYFDYDRCDFLVDFDEGKYTALEPNYSKRSKDWSVMKSLPFLIPEKSHKVLRAFYVPFLTDNHIQYGDFNLLKRKTKRNGR</sequence>
<proteinExistence type="evidence at transcript level"/>
<protein>
    <recommendedName>
        <fullName evidence="7">Alpha-1,2-mannosyltransferase Alg9</fullName>
        <ecNumber evidence="1">2.4.1.259</ecNumber>
        <ecNumber evidence="1">2.4.1.261</ecNumber>
    </recommendedName>
    <alternativeName>
        <fullName evidence="5">Dolichyl-P-Man:Man6GlcNAc2-PP-dolichol alpha-1,2-mannosyltransferase</fullName>
    </alternativeName>
    <alternativeName>
        <fullName evidence="5">Dolichyl-P-Man:Man8GlcNAc2-PP-dolichol alpha-1,2-mannosyltransferase</fullName>
    </alternativeName>
</protein>
<dbReference type="EC" id="2.4.1.259" evidence="1"/>
<dbReference type="EC" id="2.4.1.261" evidence="1"/>
<dbReference type="EMBL" id="AE014297">
    <property type="protein sequence ID" value="AAF56419.1"/>
    <property type="molecule type" value="Genomic_DNA"/>
</dbReference>
<dbReference type="EMBL" id="AY069643">
    <property type="protein sequence ID" value="AAL39788.1"/>
    <property type="molecule type" value="mRNA"/>
</dbReference>
<dbReference type="RefSeq" id="NP_651353.1">
    <property type="nucleotide sequence ID" value="NM_143096.4"/>
</dbReference>
<dbReference type="FunCoup" id="Q9VBV8">
    <property type="interactions" value="2553"/>
</dbReference>
<dbReference type="STRING" id="7227.FBpp0084183"/>
<dbReference type="CAZy" id="GT22">
    <property type="family name" value="Glycosyltransferase Family 22"/>
</dbReference>
<dbReference type="PaxDb" id="7227-FBpp0084183"/>
<dbReference type="DNASU" id="43031"/>
<dbReference type="EnsemblMetazoa" id="FBtr0084808">
    <property type="protein sequence ID" value="FBpp0084183"/>
    <property type="gene ID" value="FBgn0039293"/>
</dbReference>
<dbReference type="GeneID" id="43031"/>
<dbReference type="KEGG" id="dme:Dmel_CG11851"/>
<dbReference type="UCSC" id="CG11851-RA">
    <property type="organism name" value="d. melanogaster"/>
</dbReference>
<dbReference type="AGR" id="FB:FBgn0039293"/>
<dbReference type="CTD" id="79796"/>
<dbReference type="FlyBase" id="FBgn0039293">
    <property type="gene designation" value="Alg9"/>
</dbReference>
<dbReference type="VEuPathDB" id="VectorBase:FBgn0039293"/>
<dbReference type="eggNOG" id="KOG2515">
    <property type="taxonomic scope" value="Eukaryota"/>
</dbReference>
<dbReference type="GeneTree" id="ENSGT00950000183090"/>
<dbReference type="HOGENOM" id="CLU_018152_1_1_1"/>
<dbReference type="OMA" id="PRDMHAK"/>
<dbReference type="OrthoDB" id="497541at2759"/>
<dbReference type="Reactome" id="R-DME-446193">
    <property type="pathway name" value="Biosynthesis of the N-glycan precursor (dolichol lipid-linked oligosaccharide, LLO) and transfer to a nascent protein"/>
</dbReference>
<dbReference type="UniPathway" id="UPA00378"/>
<dbReference type="BioGRID-ORCS" id="43031">
    <property type="hits" value="0 hits in 3 CRISPR screens"/>
</dbReference>
<dbReference type="Proteomes" id="UP000000803">
    <property type="component" value="Chromosome 3R"/>
</dbReference>
<dbReference type="Bgee" id="FBgn0039293">
    <property type="expression patterns" value="Expressed in embryonic/larval hemocyte (Drosophila) and 58 other cell types or tissues"/>
</dbReference>
<dbReference type="GO" id="GO:0012505">
    <property type="term" value="C:endomembrane system"/>
    <property type="evidence" value="ECO:0007005"/>
    <property type="project" value="FlyBase"/>
</dbReference>
<dbReference type="GO" id="GO:0005789">
    <property type="term" value="C:endoplasmic reticulum membrane"/>
    <property type="evidence" value="ECO:0000318"/>
    <property type="project" value="GO_Central"/>
</dbReference>
<dbReference type="GO" id="GO:0000026">
    <property type="term" value="F:alpha-1,2-mannosyltransferase activity"/>
    <property type="evidence" value="ECO:0000318"/>
    <property type="project" value="GO_Central"/>
</dbReference>
<dbReference type="GO" id="GO:0052926">
    <property type="term" value="F:dol-P-Man:Man(6)GlcNAc(2)-PP-Dol alpha-1,2-mannosyltransferase activity"/>
    <property type="evidence" value="ECO:0000250"/>
    <property type="project" value="FlyBase"/>
</dbReference>
<dbReference type="GO" id="GO:0052918">
    <property type="term" value="F:dol-P-Man:Man(8)GlcNAc(2)-PP-Dol alpha-1,2-mannosyltransferase activity"/>
    <property type="evidence" value="ECO:0000250"/>
    <property type="project" value="FlyBase"/>
</dbReference>
<dbReference type="GO" id="GO:0006487">
    <property type="term" value="P:protein N-linked glycosylation"/>
    <property type="evidence" value="ECO:0000318"/>
    <property type="project" value="GO_Central"/>
</dbReference>
<dbReference type="InterPro" id="IPR005599">
    <property type="entry name" value="GPI_mannosylTrfase"/>
</dbReference>
<dbReference type="PANTHER" id="PTHR22760:SF2">
    <property type="entry name" value="ALPHA-1,2-MANNOSYLTRANSFERASE ALG9"/>
    <property type="match status" value="1"/>
</dbReference>
<dbReference type="PANTHER" id="PTHR22760">
    <property type="entry name" value="GLYCOSYLTRANSFERASE"/>
    <property type="match status" value="1"/>
</dbReference>
<dbReference type="Pfam" id="PF03901">
    <property type="entry name" value="Glyco_transf_22"/>
    <property type="match status" value="1"/>
</dbReference>
<evidence type="ECO:0000250" key="1">
    <source>
        <dbReference type="UniProtKB" id="Q9H6U8"/>
    </source>
</evidence>
<evidence type="ECO:0000255" key="2">
    <source>
        <dbReference type="RuleBase" id="RU363075"/>
    </source>
</evidence>
<evidence type="ECO:0000269" key="3">
    <source>
    </source>
</evidence>
<evidence type="ECO:0000269" key="4">
    <source>
    </source>
</evidence>
<evidence type="ECO:0000305" key="5"/>
<evidence type="ECO:0000312" key="6">
    <source>
        <dbReference type="EMBL" id="AAL39788.1"/>
    </source>
</evidence>
<evidence type="ECO:0000312" key="7">
    <source>
        <dbReference type="FlyBase" id="FBgn0039293"/>
    </source>
</evidence>
<evidence type="ECO:0000312" key="8">
    <source>
        <dbReference type="Proteomes" id="UP000000803"/>
    </source>
</evidence>
<feature type="chain" id="PRO_0000462478" description="Alpha-1,2-mannosyltransferase Alg9">
    <location>
        <begin position="1"/>
        <end position="623"/>
    </location>
</feature>
<feature type="transmembrane region" description="Helical" evidence="2">
    <location>
        <begin position="152"/>
        <end position="172"/>
    </location>
</feature>
<feature type="transmembrane region" description="Helical" evidence="2">
    <location>
        <begin position="193"/>
        <end position="223"/>
    </location>
</feature>
<feature type="transmembrane region" description="Helical" evidence="2">
    <location>
        <begin position="229"/>
        <end position="254"/>
    </location>
</feature>
<feature type="transmembrane region" description="Helical" evidence="2">
    <location>
        <begin position="266"/>
        <end position="284"/>
    </location>
</feature>
<feature type="transmembrane region" description="Helical" evidence="2">
    <location>
        <begin position="326"/>
        <end position="348"/>
    </location>
</feature>
<feature type="transmembrane region" description="Helical" evidence="2">
    <location>
        <begin position="360"/>
        <end position="378"/>
    </location>
</feature>
<feature type="transmembrane region" description="Helical" evidence="2">
    <location>
        <begin position="390"/>
        <end position="410"/>
    </location>
</feature>
<feature type="transmembrane region" description="Helical" evidence="2">
    <location>
        <begin position="431"/>
        <end position="452"/>
    </location>
</feature>
<organism evidence="8">
    <name type="scientific">Drosophila melanogaster</name>
    <name type="common">Fruit fly</name>
    <dbReference type="NCBI Taxonomy" id="7227"/>
    <lineage>
        <taxon>Eukaryota</taxon>
        <taxon>Metazoa</taxon>
        <taxon>Ecdysozoa</taxon>
        <taxon>Arthropoda</taxon>
        <taxon>Hexapoda</taxon>
        <taxon>Insecta</taxon>
        <taxon>Pterygota</taxon>
        <taxon>Neoptera</taxon>
        <taxon>Endopterygota</taxon>
        <taxon>Diptera</taxon>
        <taxon>Brachycera</taxon>
        <taxon>Muscomorpha</taxon>
        <taxon>Ephydroidea</taxon>
        <taxon>Drosophilidae</taxon>
        <taxon>Drosophila</taxon>
        <taxon>Sophophora</taxon>
    </lineage>
</organism>
<comment type="function">
    <text evidence="3 4">Probable alpha-1,2-mannosyltransferase involved in the N-glycosylation pathway (PubMed:29870719). Probably involved in glycosylation of the TNF receptor grnd, regulating its ligand affinity (PubMed:29870719). Required for normal epithelial growth and architecture (PubMed:29870719). Suppressor of JNK-dependent intestinal stem cell proliferation (PubMed:38944657).</text>
</comment>
<comment type="catalytic activity">
    <reaction evidence="1">
        <text>an alpha-D-Man-(1-&gt;2)-alpha-D-Man-(1-&gt;2)-alpha-D-Man-(1-&gt;3)-[alpha-D-Man-(1-&gt;3)-alpha-D-Man-(1-&gt;6)]-beta-D-Man-(1-&gt;4)-beta-D-GlcNAc-(1-&gt;4)-alpha-D-GlcNAc-diphospho-di-trans,poly-cis-dolichol + a di-trans,poly-cis-dolichyl beta-D-mannosyl phosphate = an alpha-D-Man-(1-&gt;2)-alpha-D-Man-(1-&gt;2)-alpha-D-Man-(1-&gt;3)-[alpha-D-Man-(1-&gt;2)-alpha-D-Man-(1-&gt;3)-alpha-D-Man-(1-&gt;6)]-beta-D-Man-(1-&gt;4)-beta-D-GlcNAc-(1-&gt;4)-alpha-D-GlcNAc-diphospho-di-trans,poly-cis-dolichol + a di-trans,poly-cis-dolichyl phosphate + H(+)</text>
        <dbReference type="Rhea" id="RHEA:29531"/>
        <dbReference type="Rhea" id="RHEA-COMP:19498"/>
        <dbReference type="Rhea" id="RHEA-COMP:19501"/>
        <dbReference type="Rhea" id="RHEA-COMP:19517"/>
        <dbReference type="Rhea" id="RHEA-COMP:19518"/>
        <dbReference type="ChEBI" id="CHEBI:15378"/>
        <dbReference type="ChEBI" id="CHEBI:57683"/>
        <dbReference type="ChEBI" id="CHEBI:58211"/>
        <dbReference type="ChEBI" id="CHEBI:132516"/>
        <dbReference type="ChEBI" id="CHEBI:132517"/>
        <dbReference type="EC" id="2.4.1.259"/>
    </reaction>
</comment>
<comment type="catalytic activity">
    <reaction evidence="1">
        <text>an alpha-D-Man-(1-&gt;2)-alpha-D-Man-(1-&gt;2)-alpha-D-Man-(1-&gt;3)-[alpha-D-Man-(1-&gt;2)-alpha-D-Man-(1-&gt;3)-[alpha-D-Man-(1-&gt;6)]-alpha-D-Man-(1-&gt;6)]-beta-D-Man-(1-&gt;4)-beta-D-GlcNAc-(1-&gt;4)-alpha-D-GlcNAc-diphospho-di-trans,poly-cis-dolichol + a di-trans,poly-cis-dolichyl beta-D-mannosyl phosphate = an alpha-D-Man-(1-&gt;2)-alpha-D-Man-(1-&gt;2)-alpha-D-Man-(1-&gt;3)-[alpha-D-Man-(1-&gt;2)-alpha-D-Man-(1-&gt;3)-[alpha-D-Man-(1-&gt;2)-alpha-D-Man-(1-&gt;6)]-alpha-D-Man-(1-&gt;6)]-beta-D-Man-(1-&gt;4)-beta-D-GlcNAc-(1-&gt;4)-alpha-D-GlcNAc-diphospho-di-trans,poly-cis-dolichol + a di-trans,poly-cis-dolichyl phosphate + H(+)</text>
        <dbReference type="Rhea" id="RHEA:29539"/>
        <dbReference type="Rhea" id="RHEA-COMP:19498"/>
        <dbReference type="Rhea" id="RHEA-COMP:19501"/>
        <dbReference type="Rhea" id="RHEA-COMP:19519"/>
        <dbReference type="Rhea" id="RHEA-COMP:19520"/>
        <dbReference type="ChEBI" id="CHEBI:15378"/>
        <dbReference type="ChEBI" id="CHEBI:57683"/>
        <dbReference type="ChEBI" id="CHEBI:58211"/>
        <dbReference type="ChEBI" id="CHEBI:132519"/>
        <dbReference type="ChEBI" id="CHEBI:132520"/>
        <dbReference type="EC" id="2.4.1.261"/>
    </reaction>
</comment>
<comment type="pathway">
    <text evidence="3">Protein modification; protein glycosylation.</text>
</comment>
<comment type="subcellular location">
    <subcellularLocation>
        <location evidence="2">Endoplasmic reticulum membrane</location>
        <topology evidence="2">Multi-pass membrane protein</topology>
    </subcellularLocation>
</comment>
<comment type="induction">
    <text evidence="4">Down-regulated by bacterial infection in the gut.</text>
</comment>
<comment type="disruption phenotype">
    <text evidence="3 4">Imaginal disc cell proliferation is slowed resulting in smaller imaginal discs with aberrant architecture compared to wild type larvae of the same age (PubMed:29870719). RNAi-mediated knockdown in gut progenitor cells results in increased intestinal stem cell mitotic proliferation (PubMed:38944657).</text>
</comment>
<comment type="similarity">
    <text evidence="2">Belongs to the glycosyltransferase 22 family.</text>
</comment>
<gene>
    <name evidence="7" type="primary">Alg9</name>
    <name evidence="7" type="ORF">CG11851</name>
</gene>
<name>ALG9_DROME</name>
<keyword id="KW-0256">Endoplasmic reticulum</keyword>
<keyword id="KW-0328">Glycosyltransferase</keyword>
<keyword id="KW-0472">Membrane</keyword>
<keyword id="KW-1185">Reference proteome</keyword>
<keyword id="KW-0808">Transferase</keyword>
<keyword id="KW-0812">Transmembrane</keyword>
<keyword id="KW-1133">Transmembrane helix</keyword>
<accession>Q9VBV8</accession>
<reference evidence="8" key="1">
    <citation type="journal article" date="2000" name="Science">
        <title>The genome sequence of Drosophila melanogaster.</title>
        <authorList>
            <person name="Adams M.D."/>
            <person name="Celniker S.E."/>
            <person name="Holt R.A."/>
            <person name="Evans C.A."/>
            <person name="Gocayne J.D."/>
            <person name="Amanatides P.G."/>
            <person name="Scherer S.E."/>
            <person name="Li P.W."/>
            <person name="Hoskins R.A."/>
            <person name="Galle R.F."/>
            <person name="George R.A."/>
            <person name="Lewis S.E."/>
            <person name="Richards S."/>
            <person name="Ashburner M."/>
            <person name="Henderson S.N."/>
            <person name="Sutton G.G."/>
            <person name="Wortman J.R."/>
            <person name="Yandell M.D."/>
            <person name="Zhang Q."/>
            <person name="Chen L.X."/>
            <person name="Brandon R.C."/>
            <person name="Rogers Y.-H.C."/>
            <person name="Blazej R.G."/>
            <person name="Champe M."/>
            <person name="Pfeiffer B.D."/>
            <person name="Wan K.H."/>
            <person name="Doyle C."/>
            <person name="Baxter E.G."/>
            <person name="Helt G."/>
            <person name="Nelson C.R."/>
            <person name="Miklos G.L.G."/>
            <person name="Abril J.F."/>
            <person name="Agbayani A."/>
            <person name="An H.-J."/>
            <person name="Andrews-Pfannkoch C."/>
            <person name="Baldwin D."/>
            <person name="Ballew R.M."/>
            <person name="Basu A."/>
            <person name="Baxendale J."/>
            <person name="Bayraktaroglu L."/>
            <person name="Beasley E.M."/>
            <person name="Beeson K.Y."/>
            <person name="Benos P.V."/>
            <person name="Berman B.P."/>
            <person name="Bhandari D."/>
            <person name="Bolshakov S."/>
            <person name="Borkova D."/>
            <person name="Botchan M.R."/>
            <person name="Bouck J."/>
            <person name="Brokstein P."/>
            <person name="Brottier P."/>
            <person name="Burtis K.C."/>
            <person name="Busam D.A."/>
            <person name="Butler H."/>
            <person name="Cadieu E."/>
            <person name="Center A."/>
            <person name="Chandra I."/>
            <person name="Cherry J.M."/>
            <person name="Cawley S."/>
            <person name="Dahlke C."/>
            <person name="Davenport L.B."/>
            <person name="Davies P."/>
            <person name="de Pablos B."/>
            <person name="Delcher A."/>
            <person name="Deng Z."/>
            <person name="Mays A.D."/>
            <person name="Dew I."/>
            <person name="Dietz S.M."/>
            <person name="Dodson K."/>
            <person name="Doup L.E."/>
            <person name="Downes M."/>
            <person name="Dugan-Rocha S."/>
            <person name="Dunkov B.C."/>
            <person name="Dunn P."/>
            <person name="Durbin K.J."/>
            <person name="Evangelista C.C."/>
            <person name="Ferraz C."/>
            <person name="Ferriera S."/>
            <person name="Fleischmann W."/>
            <person name="Fosler C."/>
            <person name="Gabrielian A.E."/>
            <person name="Garg N.S."/>
            <person name="Gelbart W.M."/>
            <person name="Glasser K."/>
            <person name="Glodek A."/>
            <person name="Gong F."/>
            <person name="Gorrell J.H."/>
            <person name="Gu Z."/>
            <person name="Guan P."/>
            <person name="Harris M."/>
            <person name="Harris N.L."/>
            <person name="Harvey D.A."/>
            <person name="Heiman T.J."/>
            <person name="Hernandez J.R."/>
            <person name="Houck J."/>
            <person name="Hostin D."/>
            <person name="Houston K.A."/>
            <person name="Howland T.J."/>
            <person name="Wei M.-H."/>
            <person name="Ibegwam C."/>
            <person name="Jalali M."/>
            <person name="Kalush F."/>
            <person name="Karpen G.H."/>
            <person name="Ke Z."/>
            <person name="Kennison J.A."/>
            <person name="Ketchum K.A."/>
            <person name="Kimmel B.E."/>
            <person name="Kodira C.D."/>
            <person name="Kraft C.L."/>
            <person name="Kravitz S."/>
            <person name="Kulp D."/>
            <person name="Lai Z."/>
            <person name="Lasko P."/>
            <person name="Lei Y."/>
            <person name="Levitsky A.A."/>
            <person name="Li J.H."/>
            <person name="Li Z."/>
            <person name="Liang Y."/>
            <person name="Lin X."/>
            <person name="Liu X."/>
            <person name="Mattei B."/>
            <person name="McIntosh T.C."/>
            <person name="McLeod M.P."/>
            <person name="McPherson D."/>
            <person name="Merkulov G."/>
            <person name="Milshina N.V."/>
            <person name="Mobarry C."/>
            <person name="Morris J."/>
            <person name="Moshrefi A."/>
            <person name="Mount S.M."/>
            <person name="Moy M."/>
            <person name="Murphy B."/>
            <person name="Murphy L."/>
            <person name="Muzny D.M."/>
            <person name="Nelson D.L."/>
            <person name="Nelson D.R."/>
            <person name="Nelson K.A."/>
            <person name="Nixon K."/>
            <person name="Nusskern D.R."/>
            <person name="Pacleb J.M."/>
            <person name="Palazzolo M."/>
            <person name="Pittman G.S."/>
            <person name="Pan S."/>
            <person name="Pollard J."/>
            <person name="Puri V."/>
            <person name="Reese M.G."/>
            <person name="Reinert K."/>
            <person name="Remington K."/>
            <person name="Saunders R.D.C."/>
            <person name="Scheeler F."/>
            <person name="Shen H."/>
            <person name="Shue B.C."/>
            <person name="Siden-Kiamos I."/>
            <person name="Simpson M."/>
            <person name="Skupski M.P."/>
            <person name="Smith T.J."/>
            <person name="Spier E."/>
            <person name="Spradling A.C."/>
            <person name="Stapleton M."/>
            <person name="Strong R."/>
            <person name="Sun E."/>
            <person name="Svirskas R."/>
            <person name="Tector C."/>
            <person name="Turner R."/>
            <person name="Venter E."/>
            <person name="Wang A.H."/>
            <person name="Wang X."/>
            <person name="Wang Z.-Y."/>
            <person name="Wassarman D.A."/>
            <person name="Weinstock G.M."/>
            <person name="Weissenbach J."/>
            <person name="Williams S.M."/>
            <person name="Woodage T."/>
            <person name="Worley K.C."/>
            <person name="Wu D."/>
            <person name="Yang S."/>
            <person name="Yao Q.A."/>
            <person name="Ye J."/>
            <person name="Yeh R.-F."/>
            <person name="Zaveri J.S."/>
            <person name="Zhan M."/>
            <person name="Zhang G."/>
            <person name="Zhao Q."/>
            <person name="Zheng L."/>
            <person name="Zheng X.H."/>
            <person name="Zhong F.N."/>
            <person name="Zhong W."/>
            <person name="Zhou X."/>
            <person name="Zhu S.C."/>
            <person name="Zhu X."/>
            <person name="Smith H.O."/>
            <person name="Gibbs R.A."/>
            <person name="Myers E.W."/>
            <person name="Rubin G.M."/>
            <person name="Venter J.C."/>
        </authorList>
    </citation>
    <scope>NUCLEOTIDE SEQUENCE [LARGE SCALE GENOMIC DNA]</scope>
    <source>
        <strain evidence="8">Berkeley</strain>
    </source>
</reference>
<reference evidence="8" key="2">
    <citation type="journal article" date="2002" name="Genome Biol.">
        <title>Annotation of the Drosophila melanogaster euchromatic genome: a systematic review.</title>
        <authorList>
            <person name="Misra S."/>
            <person name="Crosby M.A."/>
            <person name="Mungall C.J."/>
            <person name="Matthews B.B."/>
            <person name="Campbell K.S."/>
            <person name="Hradecky P."/>
            <person name="Huang Y."/>
            <person name="Kaminker J.S."/>
            <person name="Millburn G.H."/>
            <person name="Prochnik S.E."/>
            <person name="Smith C.D."/>
            <person name="Tupy J.L."/>
            <person name="Whitfield E.J."/>
            <person name="Bayraktaroglu L."/>
            <person name="Berman B.P."/>
            <person name="Bettencourt B.R."/>
            <person name="Celniker S.E."/>
            <person name="de Grey A.D.N.J."/>
            <person name="Drysdale R.A."/>
            <person name="Harris N.L."/>
            <person name="Richter J."/>
            <person name="Russo S."/>
            <person name="Schroeder A.J."/>
            <person name="Shu S.Q."/>
            <person name="Stapleton M."/>
            <person name="Yamada C."/>
            <person name="Ashburner M."/>
            <person name="Gelbart W.M."/>
            <person name="Rubin G.M."/>
            <person name="Lewis S.E."/>
        </authorList>
    </citation>
    <scope>GENOME REANNOTATION</scope>
    <source>
        <strain evidence="8">Berkeley</strain>
    </source>
</reference>
<reference evidence="6" key="3">
    <citation type="journal article" date="2002" name="Genome Biol.">
        <title>A Drosophila full-length cDNA resource.</title>
        <authorList>
            <person name="Stapleton M."/>
            <person name="Carlson J.W."/>
            <person name="Brokstein P."/>
            <person name="Yu C."/>
            <person name="Champe M."/>
            <person name="George R.A."/>
            <person name="Guarin H."/>
            <person name="Kronmiller B."/>
            <person name="Pacleb J.M."/>
            <person name="Park S."/>
            <person name="Wan K.H."/>
            <person name="Rubin G.M."/>
            <person name="Celniker S.E."/>
        </authorList>
    </citation>
    <scope>NUCLEOTIDE SEQUENCE [LARGE SCALE MRNA]</scope>
    <source>
        <strain evidence="6">Berkeley</strain>
        <tissue evidence="6">Embryo</tissue>
    </source>
</reference>
<reference evidence="5" key="4">
    <citation type="journal article" date="2018" name="Dev. Cell">
        <title>A Drosophila Tumor Suppressor Gene Prevents Tonic TNF Signaling through Receptor N-Glycosylation.</title>
        <authorList>
            <person name="de Vreede G."/>
            <person name="Morrison H.A."/>
            <person name="Houser A.M."/>
            <person name="Boileau R.M."/>
            <person name="Andersen D."/>
            <person name="Colombani J."/>
            <person name="Bilder D."/>
        </authorList>
    </citation>
    <scope>FUNCTION</scope>
    <scope>PATHWAY</scope>
    <scope>DISRUPTION PHENOTYPE</scope>
</reference>
<reference evidence="5" key="5">
    <citation type="journal article" date="2024" name="Nat. Commun.">
        <title>Inter-cell type interactions that control JNK signaling in the Drosophila intestine.</title>
        <authorList>
            <person name="Zhang P."/>
            <person name="Pronovost S.M."/>
            <person name="Marchetti M."/>
            <person name="Zhang C."/>
            <person name="Kang X."/>
            <person name="Kandelouei T."/>
            <person name="Li C."/>
            <person name="Edgar B.A."/>
        </authorList>
    </citation>
    <scope>DISRUPTION PHENOTYPE</scope>
    <scope>INDUCTION BY BACTERIAL INFECTION</scope>
</reference>